<reference key="1">
    <citation type="journal article" date="2007" name="Nat. Biotechnol.">
        <title>Genome sequence of the lignocellulose-bioconverting and xylose-fermenting yeast Pichia stipitis.</title>
        <authorList>
            <person name="Jeffries T.W."/>
            <person name="Grigoriev I.V."/>
            <person name="Grimwood J."/>
            <person name="Laplaza J.M."/>
            <person name="Aerts A."/>
            <person name="Salamov A."/>
            <person name="Schmutz J."/>
            <person name="Lindquist E."/>
            <person name="Dehal P."/>
            <person name="Shapiro H."/>
            <person name="Jin Y.-S."/>
            <person name="Passoth V."/>
            <person name="Richardson P.M."/>
        </authorList>
    </citation>
    <scope>NUCLEOTIDE SEQUENCE [LARGE SCALE GENOMIC DNA]</scope>
    <source>
        <strain>ATCC 58785 / CBS 6054 / NBRC 10063 / NRRL Y-11545</strain>
    </source>
</reference>
<feature type="chain" id="PRO_0000408678" description="Probable endonuclease LCL3">
    <location>
        <begin position="1"/>
        <end position="235"/>
    </location>
</feature>
<feature type="transmembrane region" description="Helical" evidence="2">
    <location>
        <begin position="20"/>
        <end position="37"/>
    </location>
</feature>
<feature type="domain" description="TNase-like" evidence="3">
    <location>
        <begin position="59"/>
        <end position="217"/>
    </location>
</feature>
<feature type="active site" evidence="3">
    <location>
        <position position="108"/>
    </location>
</feature>
<feature type="active site" evidence="3">
    <location>
        <position position="116"/>
    </location>
</feature>
<feature type="active site" evidence="3">
    <location>
        <position position="156"/>
    </location>
</feature>
<feature type="binding site" evidence="3">
    <location>
        <position position="113"/>
    </location>
    <ligand>
        <name>Ca(2+)</name>
        <dbReference type="ChEBI" id="CHEBI:29108"/>
    </ligand>
</feature>
<accession>A3GI61</accession>
<organism>
    <name type="scientific">Scheffersomyces stipitis (strain ATCC 58785 / CBS 6054 / NBRC 10063 / NRRL Y-11545)</name>
    <name type="common">Yeast</name>
    <name type="synonym">Pichia stipitis</name>
    <dbReference type="NCBI Taxonomy" id="322104"/>
    <lineage>
        <taxon>Eukaryota</taxon>
        <taxon>Fungi</taxon>
        <taxon>Dikarya</taxon>
        <taxon>Ascomycota</taxon>
        <taxon>Saccharomycotina</taxon>
        <taxon>Pichiomycetes</taxon>
        <taxon>Debaryomycetaceae</taxon>
        <taxon>Scheffersomyces</taxon>
    </lineage>
</organism>
<evidence type="ECO:0000250" key="1"/>
<evidence type="ECO:0000255" key="2"/>
<evidence type="ECO:0000255" key="3">
    <source>
        <dbReference type="PROSITE-ProRule" id="PRU00272"/>
    </source>
</evidence>
<evidence type="ECO:0000305" key="4"/>
<sequence>MAPIPQNSSTEVSLLHPKVLLLSAGITTTAFLSYKFHQRYVTRLRTYLDITPKILDNQQKLYGYVTRVGDGDNFRFFHTPGGVFMGWGWLRKIPTNRNQLKDETLMIRLCGVDAPERSHWGKPAQPFSEEALIWLSSYVGKRYVTVTPFSIDQYKRLVARAQVWKWTGKKDVSAEMIRQGLGIVYEGKSGAEFGDNEALYRNLEAKAKRQKKGVWSLGKKMTTPGEFKREHYRGD</sequence>
<proteinExistence type="inferred from homology"/>
<gene>
    <name type="primary">LCL3</name>
    <name type="ORF">PICST_29232</name>
</gene>
<dbReference type="EC" id="3.1.-.-"/>
<dbReference type="EMBL" id="AAVQ01000002">
    <property type="protein sequence ID" value="EAZ63178.2"/>
    <property type="molecule type" value="Genomic_DNA"/>
</dbReference>
<dbReference type="RefSeq" id="XP_001387201.2">
    <property type="nucleotide sequence ID" value="XM_001387164.1"/>
</dbReference>
<dbReference type="SMR" id="A3GI61"/>
<dbReference type="FunCoup" id="A3GI61">
    <property type="interactions" value="14"/>
</dbReference>
<dbReference type="STRING" id="322104.A3GI61"/>
<dbReference type="GeneID" id="4851960"/>
<dbReference type="KEGG" id="pic:PICST_29232"/>
<dbReference type="eggNOG" id="ENOG502S1U4">
    <property type="taxonomic scope" value="Eukaryota"/>
</dbReference>
<dbReference type="HOGENOM" id="CLU_046484_0_1_1"/>
<dbReference type="InParanoid" id="A3GI61"/>
<dbReference type="OMA" id="IYHTPGG"/>
<dbReference type="OrthoDB" id="430293at2759"/>
<dbReference type="Proteomes" id="UP000002258">
    <property type="component" value="Chromosome 1"/>
</dbReference>
<dbReference type="GO" id="GO:0016020">
    <property type="term" value="C:membrane"/>
    <property type="evidence" value="ECO:0007669"/>
    <property type="project" value="UniProtKB-SubCell"/>
</dbReference>
<dbReference type="GO" id="GO:0005739">
    <property type="term" value="C:mitochondrion"/>
    <property type="evidence" value="ECO:0007669"/>
    <property type="project" value="UniProtKB-SubCell"/>
</dbReference>
<dbReference type="GO" id="GO:0004519">
    <property type="term" value="F:endonuclease activity"/>
    <property type="evidence" value="ECO:0007669"/>
    <property type="project" value="UniProtKB-KW"/>
</dbReference>
<dbReference type="GO" id="GO:0046872">
    <property type="term" value="F:metal ion binding"/>
    <property type="evidence" value="ECO:0007669"/>
    <property type="project" value="UniProtKB-KW"/>
</dbReference>
<dbReference type="FunFam" id="2.40.50.90:FF:000035">
    <property type="entry name" value="Probable endonuclease LCL3"/>
    <property type="match status" value="1"/>
</dbReference>
<dbReference type="Gene3D" id="2.40.50.90">
    <property type="match status" value="1"/>
</dbReference>
<dbReference type="InterPro" id="IPR035437">
    <property type="entry name" value="SNase_OB-fold_sf"/>
</dbReference>
<dbReference type="InterPro" id="IPR016071">
    <property type="entry name" value="Staphylococal_nuclease_OB-fold"/>
</dbReference>
<dbReference type="PANTHER" id="PTHR12302">
    <property type="entry name" value="EBNA2 BINDING PROTEIN P100"/>
    <property type="match status" value="1"/>
</dbReference>
<dbReference type="PANTHER" id="PTHR12302:SF3">
    <property type="entry name" value="SERINE_THREONINE-PROTEIN KINASE 31"/>
    <property type="match status" value="1"/>
</dbReference>
<dbReference type="Pfam" id="PF00565">
    <property type="entry name" value="SNase"/>
    <property type="match status" value="1"/>
</dbReference>
<dbReference type="SMART" id="SM00318">
    <property type="entry name" value="SNc"/>
    <property type="match status" value="1"/>
</dbReference>
<dbReference type="SUPFAM" id="SSF50199">
    <property type="entry name" value="Staphylococcal nuclease"/>
    <property type="match status" value="1"/>
</dbReference>
<dbReference type="PROSITE" id="PS50830">
    <property type="entry name" value="TNASE_3"/>
    <property type="match status" value="1"/>
</dbReference>
<keyword id="KW-0106">Calcium</keyword>
<keyword id="KW-0255">Endonuclease</keyword>
<keyword id="KW-0378">Hydrolase</keyword>
<keyword id="KW-0472">Membrane</keyword>
<keyword id="KW-0479">Metal-binding</keyword>
<keyword id="KW-0496">Mitochondrion</keyword>
<keyword id="KW-0540">Nuclease</keyword>
<keyword id="KW-1185">Reference proteome</keyword>
<keyword id="KW-0812">Transmembrane</keyword>
<keyword id="KW-1133">Transmembrane helix</keyword>
<name>LCL3_PICST</name>
<protein>
    <recommendedName>
        <fullName>Probable endonuclease LCL3</fullName>
        <ecNumber>3.1.-.-</ecNumber>
    </recommendedName>
</protein>
<comment type="subcellular location">
    <subcellularLocation>
        <location>Mitochondrion</location>
    </subcellularLocation>
    <subcellularLocation>
        <location evidence="1">Membrane</location>
        <topology evidence="1">Single-pass membrane protein</topology>
    </subcellularLocation>
</comment>
<comment type="similarity">
    <text evidence="4">Belongs to the LCL3 family.</text>
</comment>